<protein>
    <recommendedName>
        <fullName evidence="1">Acetyl-coenzyme A carboxylase carboxyl transferase subunit beta</fullName>
        <shortName evidence="1">ACCase subunit beta</shortName>
        <shortName evidence="1">Acetyl-CoA carboxylase carboxyltransferase subunit beta</shortName>
        <ecNumber evidence="1">2.1.3.15</ecNumber>
    </recommendedName>
</protein>
<gene>
    <name evidence="1" type="primary">accD</name>
    <name type="ordered locus">CC_3542</name>
</gene>
<dbReference type="EC" id="2.1.3.15" evidence="1"/>
<dbReference type="EMBL" id="AE005673">
    <property type="protein sequence ID" value="AAK25504.1"/>
    <property type="molecule type" value="Genomic_DNA"/>
</dbReference>
<dbReference type="PIR" id="D87688">
    <property type="entry name" value="D87688"/>
</dbReference>
<dbReference type="RefSeq" id="NP_422336.1">
    <property type="nucleotide sequence ID" value="NC_002696.2"/>
</dbReference>
<dbReference type="RefSeq" id="WP_010921371.1">
    <property type="nucleotide sequence ID" value="NC_002696.2"/>
</dbReference>
<dbReference type="SMR" id="Q9A2L5"/>
<dbReference type="STRING" id="190650.CC_3542"/>
<dbReference type="EnsemblBacteria" id="AAK25504">
    <property type="protein sequence ID" value="AAK25504"/>
    <property type="gene ID" value="CC_3542"/>
</dbReference>
<dbReference type="KEGG" id="ccr:CC_3542"/>
<dbReference type="PATRIC" id="fig|190650.5.peg.3547"/>
<dbReference type="eggNOG" id="COG0777">
    <property type="taxonomic scope" value="Bacteria"/>
</dbReference>
<dbReference type="HOGENOM" id="CLU_015486_1_0_5"/>
<dbReference type="BioCyc" id="CAULO:CC3542-MONOMER"/>
<dbReference type="UniPathway" id="UPA00655">
    <property type="reaction ID" value="UER00711"/>
</dbReference>
<dbReference type="Proteomes" id="UP000001816">
    <property type="component" value="Chromosome"/>
</dbReference>
<dbReference type="GO" id="GO:0009329">
    <property type="term" value="C:acetate CoA-transferase complex"/>
    <property type="evidence" value="ECO:0007669"/>
    <property type="project" value="TreeGrafter"/>
</dbReference>
<dbReference type="GO" id="GO:0003989">
    <property type="term" value="F:acetyl-CoA carboxylase activity"/>
    <property type="evidence" value="ECO:0007669"/>
    <property type="project" value="InterPro"/>
</dbReference>
<dbReference type="GO" id="GO:0005524">
    <property type="term" value="F:ATP binding"/>
    <property type="evidence" value="ECO:0007669"/>
    <property type="project" value="UniProtKB-KW"/>
</dbReference>
<dbReference type="GO" id="GO:0016743">
    <property type="term" value="F:carboxyl- or carbamoyltransferase activity"/>
    <property type="evidence" value="ECO:0007669"/>
    <property type="project" value="UniProtKB-UniRule"/>
</dbReference>
<dbReference type="GO" id="GO:0006633">
    <property type="term" value="P:fatty acid biosynthetic process"/>
    <property type="evidence" value="ECO:0007669"/>
    <property type="project" value="UniProtKB-KW"/>
</dbReference>
<dbReference type="GO" id="GO:2001295">
    <property type="term" value="P:malonyl-CoA biosynthetic process"/>
    <property type="evidence" value="ECO:0007669"/>
    <property type="project" value="UniProtKB-UniRule"/>
</dbReference>
<dbReference type="Gene3D" id="3.90.226.10">
    <property type="entry name" value="2-enoyl-CoA Hydratase, Chain A, domain 1"/>
    <property type="match status" value="1"/>
</dbReference>
<dbReference type="HAMAP" id="MF_01395">
    <property type="entry name" value="AcetylCoA_CT_beta"/>
    <property type="match status" value="1"/>
</dbReference>
<dbReference type="InterPro" id="IPR034733">
    <property type="entry name" value="AcCoA_carboxyl_beta"/>
</dbReference>
<dbReference type="InterPro" id="IPR000438">
    <property type="entry name" value="Acetyl_CoA_COase_Trfase_b_su"/>
</dbReference>
<dbReference type="InterPro" id="IPR029045">
    <property type="entry name" value="ClpP/crotonase-like_dom_sf"/>
</dbReference>
<dbReference type="InterPro" id="IPR011762">
    <property type="entry name" value="COA_CT_N"/>
</dbReference>
<dbReference type="PANTHER" id="PTHR42995">
    <property type="entry name" value="ACETYL-COENZYME A CARBOXYLASE CARBOXYL TRANSFERASE SUBUNIT BETA, CHLOROPLASTIC"/>
    <property type="match status" value="1"/>
</dbReference>
<dbReference type="PANTHER" id="PTHR42995:SF5">
    <property type="entry name" value="ACETYL-COENZYME A CARBOXYLASE CARBOXYL TRANSFERASE SUBUNIT BETA, CHLOROPLASTIC"/>
    <property type="match status" value="1"/>
</dbReference>
<dbReference type="Pfam" id="PF01039">
    <property type="entry name" value="Carboxyl_trans"/>
    <property type="match status" value="1"/>
</dbReference>
<dbReference type="PRINTS" id="PR01070">
    <property type="entry name" value="ACCCTRFRASEB"/>
</dbReference>
<dbReference type="SUPFAM" id="SSF52096">
    <property type="entry name" value="ClpP/crotonase"/>
    <property type="match status" value="1"/>
</dbReference>
<dbReference type="PROSITE" id="PS50980">
    <property type="entry name" value="COA_CT_NTER"/>
    <property type="match status" value="1"/>
</dbReference>
<reference key="1">
    <citation type="journal article" date="2001" name="Proc. Natl. Acad. Sci. U.S.A.">
        <title>Complete genome sequence of Caulobacter crescentus.</title>
        <authorList>
            <person name="Nierman W.C."/>
            <person name="Feldblyum T.V."/>
            <person name="Laub M.T."/>
            <person name="Paulsen I.T."/>
            <person name="Nelson K.E."/>
            <person name="Eisen J.A."/>
            <person name="Heidelberg J.F."/>
            <person name="Alley M.R.K."/>
            <person name="Ohta N."/>
            <person name="Maddock J.R."/>
            <person name="Potocka I."/>
            <person name="Nelson W.C."/>
            <person name="Newton A."/>
            <person name="Stephens C."/>
            <person name="Phadke N.D."/>
            <person name="Ely B."/>
            <person name="DeBoy R.T."/>
            <person name="Dodson R.J."/>
            <person name="Durkin A.S."/>
            <person name="Gwinn M.L."/>
            <person name="Haft D.H."/>
            <person name="Kolonay J.F."/>
            <person name="Smit J."/>
            <person name="Craven M.B."/>
            <person name="Khouri H.M."/>
            <person name="Shetty J."/>
            <person name="Berry K.J."/>
            <person name="Utterback T.R."/>
            <person name="Tran K."/>
            <person name="Wolf A.M."/>
            <person name="Vamathevan J.J."/>
            <person name="Ermolaeva M.D."/>
            <person name="White O."/>
            <person name="Salzberg S.L."/>
            <person name="Venter J.C."/>
            <person name="Shapiro L."/>
            <person name="Fraser C.M."/>
        </authorList>
    </citation>
    <scope>NUCLEOTIDE SEQUENCE [LARGE SCALE GENOMIC DNA]</scope>
    <source>
        <strain>ATCC 19089 / CIP 103742 / CB 15</strain>
    </source>
</reference>
<keyword id="KW-0067">ATP-binding</keyword>
<keyword id="KW-0963">Cytoplasm</keyword>
<keyword id="KW-0275">Fatty acid biosynthesis</keyword>
<keyword id="KW-0276">Fatty acid metabolism</keyword>
<keyword id="KW-0444">Lipid biosynthesis</keyword>
<keyword id="KW-0443">Lipid metabolism</keyword>
<keyword id="KW-0547">Nucleotide-binding</keyword>
<keyword id="KW-1185">Reference proteome</keyword>
<keyword id="KW-0808">Transferase</keyword>
<proteinExistence type="inferred from homology"/>
<evidence type="ECO:0000255" key="1">
    <source>
        <dbReference type="HAMAP-Rule" id="MF_01395"/>
    </source>
</evidence>
<evidence type="ECO:0000255" key="2">
    <source>
        <dbReference type="PROSITE-ProRule" id="PRU01136"/>
    </source>
</evidence>
<evidence type="ECO:0000256" key="3">
    <source>
        <dbReference type="SAM" id="MobiDB-lite"/>
    </source>
</evidence>
<organism>
    <name type="scientific">Caulobacter vibrioides (strain ATCC 19089 / CIP 103742 / CB 15)</name>
    <name type="common">Caulobacter crescentus</name>
    <dbReference type="NCBI Taxonomy" id="190650"/>
    <lineage>
        <taxon>Bacteria</taxon>
        <taxon>Pseudomonadati</taxon>
        <taxon>Pseudomonadota</taxon>
        <taxon>Alphaproteobacteria</taxon>
        <taxon>Caulobacterales</taxon>
        <taxon>Caulobacteraceae</taxon>
        <taxon>Caulobacter</taxon>
    </lineage>
</organism>
<sequence>MAMAEPQDPKKGDKKTAERRGGGWLSRIAPGVRGAFAKRETPENLWVKCPDTGEMIFRSDLEAALWVTPAGRHMRIGPEARFKFTFDDGQYEALPTPPVVEDPLKFSDGKPYKDRLVAARKATGEPDAMAIGYGKVGGVDAVVLVQDFAFMGGSLGMAAGEGFIAAAKAALERQVPMIAFTAAGGARMQEGALSLMQMARTTLAINELKDAALPYVVVLTDPTTGGVTASYAMLGDIHLAEPGALIGFAGPRVIEQTIRETLPPGFQRSEYLVEKGMVDRVTHRKELPEVLGSLLGTLMMGRKRQAA</sequence>
<comment type="function">
    <text evidence="1">Component of the acetyl coenzyme A carboxylase (ACC) complex. Biotin carboxylase (BC) catalyzes the carboxylation of biotin on its carrier protein (BCCP) and then the CO(2) group is transferred by the transcarboxylase to acetyl-CoA to form malonyl-CoA.</text>
</comment>
<comment type="catalytic activity">
    <reaction evidence="1">
        <text>N(6)-carboxybiotinyl-L-lysyl-[protein] + acetyl-CoA = N(6)-biotinyl-L-lysyl-[protein] + malonyl-CoA</text>
        <dbReference type="Rhea" id="RHEA:54728"/>
        <dbReference type="Rhea" id="RHEA-COMP:10505"/>
        <dbReference type="Rhea" id="RHEA-COMP:10506"/>
        <dbReference type="ChEBI" id="CHEBI:57288"/>
        <dbReference type="ChEBI" id="CHEBI:57384"/>
        <dbReference type="ChEBI" id="CHEBI:83144"/>
        <dbReference type="ChEBI" id="CHEBI:83145"/>
        <dbReference type="EC" id="2.1.3.15"/>
    </reaction>
</comment>
<comment type="pathway">
    <text evidence="1">Lipid metabolism; malonyl-CoA biosynthesis; malonyl-CoA from acetyl-CoA: step 1/1.</text>
</comment>
<comment type="subunit">
    <text evidence="1">Acetyl-CoA carboxylase is a heterohexamer composed of biotin carboxyl carrier protein (AccB), biotin carboxylase (AccC) and two subunits each of ACCase subunit alpha (AccA) and ACCase subunit beta (AccD).</text>
</comment>
<comment type="subcellular location">
    <subcellularLocation>
        <location evidence="1">Cytoplasm</location>
    </subcellularLocation>
</comment>
<comment type="similarity">
    <text evidence="1">Belongs to the AccD/PCCB family.</text>
</comment>
<name>ACCD_CAUVC</name>
<feature type="chain" id="PRO_0000389710" description="Acetyl-coenzyme A carboxylase carboxyl transferase subunit beta">
    <location>
        <begin position="1"/>
        <end position="307"/>
    </location>
</feature>
<feature type="domain" description="CoA carboxyltransferase N-terminal" evidence="2">
    <location>
        <begin position="45"/>
        <end position="307"/>
    </location>
</feature>
<feature type="region of interest" description="Disordered" evidence="3">
    <location>
        <begin position="1"/>
        <end position="26"/>
    </location>
</feature>
<feature type="compositionally biased region" description="Basic and acidic residues" evidence="3">
    <location>
        <begin position="7"/>
        <end position="21"/>
    </location>
</feature>
<accession>Q9A2L5</accession>